<reference key="1">
    <citation type="submission" date="2006-09" db="EMBL/GenBank/DDBJ databases">
        <authorList>
            <consortium name="The Klebsiella pneumonia Genome Sequencing Project"/>
            <person name="McClelland M."/>
            <person name="Sanderson E.K."/>
            <person name="Spieth J."/>
            <person name="Clifton W.S."/>
            <person name="Latreille P."/>
            <person name="Sabo A."/>
            <person name="Pepin K."/>
            <person name="Bhonagiri V."/>
            <person name="Porwollik S."/>
            <person name="Ali J."/>
            <person name="Wilson R.K."/>
        </authorList>
    </citation>
    <scope>NUCLEOTIDE SEQUENCE [LARGE SCALE GENOMIC DNA]</scope>
    <source>
        <strain>ATCC 700721 / MGH 78578</strain>
    </source>
</reference>
<evidence type="ECO:0000255" key="1">
    <source>
        <dbReference type="HAMAP-Rule" id="MF_01846"/>
    </source>
</evidence>
<evidence type="ECO:0000305" key="2"/>
<proteinExistence type="inferred from homology"/>
<accession>A6TBV3</accession>
<sequence length="140" mass="16172">MRHRTIVCPLIENKGHYLLCKMAADRGVFPGQWALSGGVEPGERIEEALRREIREELGEKLILTHIAPWCFRDDTRVKTYPDGHQETIYMIYLIFNCVSANRDVTINEEFDDYAWVKAEDLKNYDLNAATRVTLSLKGLL</sequence>
<protein>
    <recommendedName>
        <fullName evidence="1">Nucleoside triphosphatase NudI</fullName>
        <ecNumber evidence="1">3.6.1.9</ecNumber>
    </recommendedName>
    <alternativeName>
        <fullName evidence="1">Nucleotide diphosphatase NudI</fullName>
    </alternativeName>
    <alternativeName>
        <fullName evidence="1">Pyrimidine deoxynucleoside triphosphate diphosphatase</fullName>
    </alternativeName>
    <alternativeName>
        <fullName evidence="1">dCTP diphosphatase</fullName>
        <ecNumber evidence="1">3.6.1.12</ecNumber>
    </alternativeName>
    <alternativeName>
        <fullName evidence="1">dTTP diphosphatase</fullName>
        <ecNumber evidence="1">3.6.1.-</ecNumber>
    </alternativeName>
    <alternativeName>
        <fullName evidence="1">dUTP diphosphatase</fullName>
        <ecNumber evidence="1">3.6.1.23</ecNumber>
    </alternativeName>
</protein>
<feature type="chain" id="PRO_0000342134" description="Nucleoside triphosphatase NudI">
    <location>
        <begin position="1"/>
        <end position="140"/>
    </location>
</feature>
<feature type="domain" description="Nudix hydrolase" evidence="1">
    <location>
        <begin position="1"/>
        <end position="140"/>
    </location>
</feature>
<feature type="short sequence motif" description="Nudix box">
    <location>
        <begin position="38"/>
        <end position="58"/>
    </location>
</feature>
<organism>
    <name type="scientific">Klebsiella pneumoniae subsp. pneumoniae (strain ATCC 700721 / MGH 78578)</name>
    <dbReference type="NCBI Taxonomy" id="272620"/>
    <lineage>
        <taxon>Bacteria</taxon>
        <taxon>Pseudomonadati</taxon>
        <taxon>Pseudomonadota</taxon>
        <taxon>Gammaproteobacteria</taxon>
        <taxon>Enterobacterales</taxon>
        <taxon>Enterobacteriaceae</taxon>
        <taxon>Klebsiella/Raoultella group</taxon>
        <taxon>Klebsiella</taxon>
        <taxon>Klebsiella pneumoniae complex</taxon>
    </lineage>
</organism>
<keyword id="KW-0378">Hydrolase</keyword>
<keyword id="KW-0460">Magnesium</keyword>
<gene>
    <name evidence="1" type="primary">nudI</name>
    <name type="ordered locus">KPN78578_26130</name>
    <name type="ORF">KPN_02657</name>
</gene>
<dbReference type="EC" id="3.6.1.9" evidence="1"/>
<dbReference type="EC" id="3.6.1.12" evidence="1"/>
<dbReference type="EC" id="3.6.1.-" evidence="1"/>
<dbReference type="EC" id="3.6.1.23" evidence="1"/>
<dbReference type="EMBL" id="CP000647">
    <property type="protein sequence ID" value="ABR78074.1"/>
    <property type="status" value="ALT_INIT"/>
    <property type="molecule type" value="Genomic_DNA"/>
</dbReference>
<dbReference type="RefSeq" id="WP_009484772.1">
    <property type="nucleotide sequence ID" value="NC_009648.1"/>
</dbReference>
<dbReference type="SMR" id="A6TBV3"/>
<dbReference type="STRING" id="272620.KPN_02657"/>
<dbReference type="PaxDb" id="272620-KPN_02657"/>
<dbReference type="EnsemblBacteria" id="ABR78074">
    <property type="protein sequence ID" value="ABR78074"/>
    <property type="gene ID" value="KPN_02657"/>
</dbReference>
<dbReference type="KEGG" id="kpn:KPN_02657"/>
<dbReference type="HOGENOM" id="CLU_037162_31_0_6"/>
<dbReference type="Proteomes" id="UP000000265">
    <property type="component" value="Chromosome"/>
</dbReference>
<dbReference type="GO" id="GO:0047840">
    <property type="term" value="F:dCTP diphosphatase activity"/>
    <property type="evidence" value="ECO:0007669"/>
    <property type="project" value="UniProtKB-EC"/>
</dbReference>
<dbReference type="GO" id="GO:0036218">
    <property type="term" value="F:dTTP diphosphatase activity"/>
    <property type="evidence" value="ECO:0007669"/>
    <property type="project" value="RHEA"/>
</dbReference>
<dbReference type="GO" id="GO:0004170">
    <property type="term" value="F:dUTP diphosphatase activity"/>
    <property type="evidence" value="ECO:0007669"/>
    <property type="project" value="UniProtKB-EC"/>
</dbReference>
<dbReference type="GO" id="GO:0000287">
    <property type="term" value="F:magnesium ion binding"/>
    <property type="evidence" value="ECO:0007669"/>
    <property type="project" value="UniProtKB-UniRule"/>
</dbReference>
<dbReference type="Gene3D" id="3.90.79.10">
    <property type="entry name" value="Nucleoside Triphosphate Pyrophosphohydrolase"/>
    <property type="match status" value="1"/>
</dbReference>
<dbReference type="HAMAP" id="MF_01846">
    <property type="entry name" value="Nudix_NudI"/>
    <property type="match status" value="1"/>
</dbReference>
<dbReference type="InterPro" id="IPR023781">
    <property type="entry name" value="Nucleoside_triphosphatase_NudI"/>
</dbReference>
<dbReference type="InterPro" id="IPR015797">
    <property type="entry name" value="NUDIX_hydrolase-like_dom_sf"/>
</dbReference>
<dbReference type="InterPro" id="IPR020084">
    <property type="entry name" value="NUDIX_hydrolase_CS"/>
</dbReference>
<dbReference type="InterPro" id="IPR000086">
    <property type="entry name" value="NUDIX_hydrolase_dom"/>
</dbReference>
<dbReference type="NCBIfam" id="NF012016">
    <property type="entry name" value="PRK15472.1"/>
    <property type="match status" value="1"/>
</dbReference>
<dbReference type="PANTHER" id="PTHR43046">
    <property type="entry name" value="GDP-MANNOSE MANNOSYL HYDROLASE"/>
    <property type="match status" value="1"/>
</dbReference>
<dbReference type="PANTHER" id="PTHR43046:SF14">
    <property type="entry name" value="MUTT_NUDIX FAMILY PROTEIN"/>
    <property type="match status" value="1"/>
</dbReference>
<dbReference type="Pfam" id="PF00293">
    <property type="entry name" value="NUDIX"/>
    <property type="match status" value="1"/>
</dbReference>
<dbReference type="SUPFAM" id="SSF55811">
    <property type="entry name" value="Nudix"/>
    <property type="match status" value="1"/>
</dbReference>
<dbReference type="PROSITE" id="PS51462">
    <property type="entry name" value="NUDIX"/>
    <property type="match status" value="1"/>
</dbReference>
<dbReference type="PROSITE" id="PS00893">
    <property type="entry name" value="NUDIX_BOX"/>
    <property type="match status" value="1"/>
</dbReference>
<name>NUDI_KLEP7</name>
<comment type="function">
    <text evidence="1">Catalyzes the hydrolysis of nucleoside triphosphates, with a preference for pyrimidine deoxynucleoside triphosphates (dUTP, dTTP and dCTP).</text>
</comment>
<comment type="catalytic activity">
    <reaction evidence="1">
        <text>a ribonucleoside 5'-triphosphate + H2O = a ribonucleoside 5'-phosphate + diphosphate + H(+)</text>
        <dbReference type="Rhea" id="RHEA:23996"/>
        <dbReference type="ChEBI" id="CHEBI:15377"/>
        <dbReference type="ChEBI" id="CHEBI:15378"/>
        <dbReference type="ChEBI" id="CHEBI:33019"/>
        <dbReference type="ChEBI" id="CHEBI:58043"/>
        <dbReference type="ChEBI" id="CHEBI:61557"/>
        <dbReference type="EC" id="3.6.1.9"/>
    </reaction>
</comment>
<comment type="catalytic activity">
    <reaction evidence="1">
        <text>a 2'-deoxyribonucleoside 5'-triphosphate + H2O = a 2'-deoxyribonucleoside 5'-phosphate + diphosphate + H(+)</text>
        <dbReference type="Rhea" id="RHEA:44644"/>
        <dbReference type="ChEBI" id="CHEBI:15377"/>
        <dbReference type="ChEBI" id="CHEBI:15378"/>
        <dbReference type="ChEBI" id="CHEBI:33019"/>
        <dbReference type="ChEBI" id="CHEBI:61560"/>
        <dbReference type="ChEBI" id="CHEBI:65317"/>
        <dbReference type="EC" id="3.6.1.9"/>
    </reaction>
</comment>
<comment type="catalytic activity">
    <reaction evidence="1">
        <text>dUTP + H2O = dUMP + diphosphate + H(+)</text>
        <dbReference type="Rhea" id="RHEA:10248"/>
        <dbReference type="ChEBI" id="CHEBI:15377"/>
        <dbReference type="ChEBI" id="CHEBI:15378"/>
        <dbReference type="ChEBI" id="CHEBI:33019"/>
        <dbReference type="ChEBI" id="CHEBI:61555"/>
        <dbReference type="ChEBI" id="CHEBI:246422"/>
        <dbReference type="EC" id="3.6.1.9"/>
    </reaction>
</comment>
<comment type="catalytic activity">
    <reaction evidence="1">
        <text>dUTP + H2O = dUMP + diphosphate + H(+)</text>
        <dbReference type="Rhea" id="RHEA:10248"/>
        <dbReference type="ChEBI" id="CHEBI:15377"/>
        <dbReference type="ChEBI" id="CHEBI:15378"/>
        <dbReference type="ChEBI" id="CHEBI:33019"/>
        <dbReference type="ChEBI" id="CHEBI:61555"/>
        <dbReference type="ChEBI" id="CHEBI:246422"/>
        <dbReference type="EC" id="3.6.1.23"/>
    </reaction>
</comment>
<comment type="catalytic activity">
    <reaction evidence="1">
        <text>dTTP + H2O = dTMP + diphosphate + H(+)</text>
        <dbReference type="Rhea" id="RHEA:28534"/>
        <dbReference type="ChEBI" id="CHEBI:15377"/>
        <dbReference type="ChEBI" id="CHEBI:15378"/>
        <dbReference type="ChEBI" id="CHEBI:33019"/>
        <dbReference type="ChEBI" id="CHEBI:37568"/>
        <dbReference type="ChEBI" id="CHEBI:63528"/>
        <dbReference type="EC" id="3.6.1.9"/>
    </reaction>
</comment>
<comment type="catalytic activity">
    <reaction evidence="1">
        <text>dCTP + H2O = dCMP + diphosphate + H(+)</text>
        <dbReference type="Rhea" id="RHEA:22636"/>
        <dbReference type="ChEBI" id="CHEBI:15377"/>
        <dbReference type="ChEBI" id="CHEBI:15378"/>
        <dbReference type="ChEBI" id="CHEBI:33019"/>
        <dbReference type="ChEBI" id="CHEBI:57566"/>
        <dbReference type="ChEBI" id="CHEBI:61481"/>
        <dbReference type="EC" id="3.6.1.9"/>
    </reaction>
</comment>
<comment type="catalytic activity">
    <reaction evidence="1">
        <text>dCTP + H2O = dCMP + diphosphate + H(+)</text>
        <dbReference type="Rhea" id="RHEA:22636"/>
        <dbReference type="ChEBI" id="CHEBI:15377"/>
        <dbReference type="ChEBI" id="CHEBI:15378"/>
        <dbReference type="ChEBI" id="CHEBI:33019"/>
        <dbReference type="ChEBI" id="CHEBI:57566"/>
        <dbReference type="ChEBI" id="CHEBI:61481"/>
        <dbReference type="EC" id="3.6.1.12"/>
    </reaction>
</comment>
<comment type="cofactor">
    <cofactor evidence="1">
        <name>Mg(2+)</name>
        <dbReference type="ChEBI" id="CHEBI:18420"/>
    </cofactor>
</comment>
<comment type="subunit">
    <text evidence="1">Monomer.</text>
</comment>
<comment type="similarity">
    <text evidence="1">Belongs to the Nudix hydrolase family. NudI subfamily.</text>
</comment>
<comment type="sequence caution" evidence="2">
    <conflict type="erroneous initiation">
        <sequence resource="EMBL-CDS" id="ABR78074"/>
    </conflict>
</comment>